<name>TUN_ARATH</name>
<proteinExistence type="evidence at transcript level"/>
<accession>Q8L7M0</accession>
<accession>B3H5N4</accession>
<accession>Q9FX74</accession>
<sequence length="465" mass="52321">MGKRGRACVVVLGDLGRSPRMQYHALSLARQASFQVDIVAYGGSIPHEAVLNHPSIHIHTMAQPRFIQYFPKILYPVTLLLKAFIQFTMLLWFLFVKVPAPDIFLVQNPPSVPTLIAVKWASSWRRAAFVVDWHNFGYTLLALSLGRNNLLVSLYRWSENHYGKMATGSLCVTKAMQHELDQNWGVRAKVLYDQPPEFFRPALLEERHELFCRVRKDLCHPIGVYDFISRELENQELNETLFTTKFNADISLKQNRPALVVSSTSWTPDENFGILLEAAVMYDRRVAARSKGSETAEISEEQHHYPNLLFIITGKGPEKEMYEEKIKRLNLRHVAFRTMWLAAEDYPLLLGSADLGVCLHTSSSGLDLPMKVVDMFGCGLPVCSVSYSCIQELVKDGKNGLLFSSSSELADQLLILFKGFPGNCDALMSLKAGAMETGSSGRWATEWEDCAKPLITQVVSQIADS</sequence>
<reference key="1">
    <citation type="journal article" date="2014" name="Plant J.">
        <title>The plant glycosyltransferase clone collection for functional genomics.</title>
        <authorList>
            <person name="Lao J."/>
            <person name="Oikawa A."/>
            <person name="Bromley J.R."/>
            <person name="McInerney P."/>
            <person name="Suttangkakul A."/>
            <person name="Smith-Moritz A.M."/>
            <person name="Plahar H."/>
            <person name="Chiu T.-Y."/>
            <person name="Gonzalez Fernandez-Nino S.M.G."/>
            <person name="Ebert B."/>
            <person name="Yang F."/>
            <person name="Christiansen K.M."/>
            <person name="Hansen S.F."/>
            <person name="Stonebloom S."/>
            <person name="Adams P.D."/>
            <person name="Ronald P.C."/>
            <person name="Hillson N.J."/>
            <person name="Hadi M.Z."/>
            <person name="Vega-Sanchez M.E."/>
            <person name="Loque D."/>
            <person name="Scheller H.V."/>
            <person name="Heazlewood J.L."/>
        </authorList>
    </citation>
    <scope>NUCLEOTIDE SEQUENCE [MRNA] (ISOFORM 1)</scope>
    <scope>GENE FAMILY</scope>
    <source>
        <strain>cv. Columbia</strain>
    </source>
</reference>
<reference key="2">
    <citation type="journal article" date="2000" name="Nature">
        <title>Sequence and analysis of chromosome 1 of the plant Arabidopsis thaliana.</title>
        <authorList>
            <person name="Theologis A."/>
            <person name="Ecker J.R."/>
            <person name="Palm C.J."/>
            <person name="Federspiel N.A."/>
            <person name="Kaul S."/>
            <person name="White O."/>
            <person name="Alonso J."/>
            <person name="Altafi H."/>
            <person name="Araujo R."/>
            <person name="Bowman C.L."/>
            <person name="Brooks S.Y."/>
            <person name="Buehler E."/>
            <person name="Chan A."/>
            <person name="Chao Q."/>
            <person name="Chen H."/>
            <person name="Cheuk R.F."/>
            <person name="Chin C.W."/>
            <person name="Chung M.K."/>
            <person name="Conn L."/>
            <person name="Conway A.B."/>
            <person name="Conway A.R."/>
            <person name="Creasy T.H."/>
            <person name="Dewar K."/>
            <person name="Dunn P."/>
            <person name="Etgu P."/>
            <person name="Feldblyum T.V."/>
            <person name="Feng J.-D."/>
            <person name="Fong B."/>
            <person name="Fujii C.Y."/>
            <person name="Gill J.E."/>
            <person name="Goldsmith A.D."/>
            <person name="Haas B."/>
            <person name="Hansen N.F."/>
            <person name="Hughes B."/>
            <person name="Huizar L."/>
            <person name="Hunter J.L."/>
            <person name="Jenkins J."/>
            <person name="Johnson-Hopson C."/>
            <person name="Khan S."/>
            <person name="Khaykin E."/>
            <person name="Kim C.J."/>
            <person name="Koo H.L."/>
            <person name="Kremenetskaia I."/>
            <person name="Kurtz D.B."/>
            <person name="Kwan A."/>
            <person name="Lam B."/>
            <person name="Langin-Hooper S."/>
            <person name="Lee A."/>
            <person name="Lee J.M."/>
            <person name="Lenz C.A."/>
            <person name="Li J.H."/>
            <person name="Li Y.-P."/>
            <person name="Lin X."/>
            <person name="Liu S.X."/>
            <person name="Liu Z.A."/>
            <person name="Luros J.S."/>
            <person name="Maiti R."/>
            <person name="Marziali A."/>
            <person name="Militscher J."/>
            <person name="Miranda M."/>
            <person name="Nguyen M."/>
            <person name="Nierman W.C."/>
            <person name="Osborne B.I."/>
            <person name="Pai G."/>
            <person name="Peterson J."/>
            <person name="Pham P.K."/>
            <person name="Rizzo M."/>
            <person name="Rooney T."/>
            <person name="Rowley D."/>
            <person name="Sakano H."/>
            <person name="Salzberg S.L."/>
            <person name="Schwartz J.R."/>
            <person name="Shinn P."/>
            <person name="Southwick A.M."/>
            <person name="Sun H."/>
            <person name="Tallon L.J."/>
            <person name="Tambunga G."/>
            <person name="Toriumi M.J."/>
            <person name="Town C.D."/>
            <person name="Utterback T."/>
            <person name="Van Aken S."/>
            <person name="Vaysberg M."/>
            <person name="Vysotskaia V.S."/>
            <person name="Walker M."/>
            <person name="Wu D."/>
            <person name="Yu G."/>
            <person name="Fraser C.M."/>
            <person name="Venter J.C."/>
            <person name="Davis R.W."/>
        </authorList>
    </citation>
    <scope>NUCLEOTIDE SEQUENCE [LARGE SCALE GENOMIC DNA]</scope>
    <source>
        <strain>cv. Columbia</strain>
    </source>
</reference>
<reference key="3">
    <citation type="journal article" date="2017" name="Plant J.">
        <title>Araport11: a complete reannotation of the Arabidopsis thaliana reference genome.</title>
        <authorList>
            <person name="Cheng C.Y."/>
            <person name="Krishnakumar V."/>
            <person name="Chan A.P."/>
            <person name="Thibaud-Nissen F."/>
            <person name="Schobel S."/>
            <person name="Town C.D."/>
        </authorList>
    </citation>
    <scope>GENOME REANNOTATION</scope>
    <source>
        <strain>cv. Columbia</strain>
    </source>
</reference>
<reference key="4">
    <citation type="journal article" date="2003" name="Science">
        <title>Empirical analysis of transcriptional activity in the Arabidopsis genome.</title>
        <authorList>
            <person name="Yamada K."/>
            <person name="Lim J."/>
            <person name="Dale J.M."/>
            <person name="Chen H."/>
            <person name="Shinn P."/>
            <person name="Palm C.J."/>
            <person name="Southwick A.M."/>
            <person name="Wu H.C."/>
            <person name="Kim C.J."/>
            <person name="Nguyen M."/>
            <person name="Pham P.K."/>
            <person name="Cheuk R.F."/>
            <person name="Karlin-Newmann G."/>
            <person name="Liu S.X."/>
            <person name="Lam B."/>
            <person name="Sakano H."/>
            <person name="Wu T."/>
            <person name="Yu G."/>
            <person name="Miranda M."/>
            <person name="Quach H.L."/>
            <person name="Tripp M."/>
            <person name="Chang C.H."/>
            <person name="Lee J.M."/>
            <person name="Toriumi M.J."/>
            <person name="Chan M.M."/>
            <person name="Tang C.C."/>
            <person name="Onodera C.S."/>
            <person name="Deng J.M."/>
            <person name="Akiyama K."/>
            <person name="Ansari Y."/>
            <person name="Arakawa T."/>
            <person name="Banh J."/>
            <person name="Banno F."/>
            <person name="Bowser L."/>
            <person name="Brooks S.Y."/>
            <person name="Carninci P."/>
            <person name="Chao Q."/>
            <person name="Choy N."/>
            <person name="Enju A."/>
            <person name="Goldsmith A.D."/>
            <person name="Gurjal M."/>
            <person name="Hansen N.F."/>
            <person name="Hayashizaki Y."/>
            <person name="Johnson-Hopson C."/>
            <person name="Hsuan V.W."/>
            <person name="Iida K."/>
            <person name="Karnes M."/>
            <person name="Khan S."/>
            <person name="Koesema E."/>
            <person name="Ishida J."/>
            <person name="Jiang P.X."/>
            <person name="Jones T."/>
            <person name="Kawai J."/>
            <person name="Kamiya A."/>
            <person name="Meyers C."/>
            <person name="Nakajima M."/>
            <person name="Narusaka M."/>
            <person name="Seki M."/>
            <person name="Sakurai T."/>
            <person name="Satou M."/>
            <person name="Tamse R."/>
            <person name="Vaysberg M."/>
            <person name="Wallender E.K."/>
            <person name="Wong C."/>
            <person name="Yamamura Y."/>
            <person name="Yuan S."/>
            <person name="Shinozaki K."/>
            <person name="Davis R.W."/>
            <person name="Theologis A."/>
            <person name="Ecker J.R."/>
        </authorList>
    </citation>
    <scope>NUCLEOTIDE SEQUENCE [LARGE SCALE MRNA] (ISOFORM 1)</scope>
    <source>
        <strain>cv. Columbia</strain>
    </source>
</reference>
<reference key="5">
    <citation type="journal article" date="2015" name="PLoS Biol.">
        <title>TURAN and EVAN mediate pollen tube reception in Arabidopsis Synergids through protein glycosylation.</title>
        <authorList>
            <person name="Lindner H."/>
            <person name="Kessler S.A."/>
            <person name="Mueller L.M."/>
            <person name="Shimosato-Asano H."/>
            <person name="Boisson-Dernier A."/>
            <person name="Grossniklaus U."/>
        </authorList>
    </citation>
    <scope>FUNCTION</scope>
    <scope>DISRUPTION PHENOTYPE</scope>
    <scope>DEVELOPMENTAL STAGE</scope>
    <scope>SUBCELLULAR LOCATION</scope>
    <source>
        <strain>cv. Columbia</strain>
    </source>
</reference>
<comment type="function">
    <text evidence="3">Required for pollen tube (PT) growth and integrity by affecting the stability of the pollen-specific ANX1 and ANX2 proteins. Involved in protein N-glycosylation in the endoplasmic reticulum (ER), especially in the female gametophyte. Mediates PT reception in synergids through protein glycosylation.</text>
</comment>
<comment type="pathway">
    <text>Protein modification; protein glycosylation.</text>
</comment>
<comment type="subcellular location">
    <subcellularLocation>
        <location evidence="3">Endoplasmic reticulum membrane</location>
        <topology evidence="1">Single-pass membrane protein</topology>
    </subcellularLocation>
</comment>
<comment type="alternative products">
    <event type="alternative splicing"/>
    <isoform>
        <id>Q8L7M0-1</id>
        <name>1</name>
        <sequence type="displayed"/>
    </isoform>
    <isoform>
        <id>Q8L7M0-2</id>
        <name>2</name>
        <sequence type="described" ref="VSP_057832"/>
    </isoform>
</comment>
<comment type="developmental stage">
    <text evidence="3">In ovules, mostly observed in the female gametophyte (FG) including the synergids, which showed a ring shaped localization around their nuclei, and throughout the pollen tube (PT).</text>
</comment>
<comment type="disruption phenotype">
    <text evidence="3">Pollen tube (PT) overgrowth inside the female gametophyte (FG) without PT rupture. Premature burst immediately after PT germination. Dwarf plants accumulating anthocyanins and dying prematurely in RNAi conditions. Impaired accumulation of ANX1 and ANX2 proteins.</text>
</comment>
<comment type="similarity">
    <text evidence="5">Belongs to the glycosyltransferase group 1 family. Glycosyltransferase 33 subfamily.</text>
</comment>
<comment type="sequence caution" evidence="5">
    <conflict type="erroneous gene model prediction">
        <sequence resource="EMBL-CDS" id="AAG10823"/>
    </conflict>
</comment>
<evidence type="ECO:0000255" key="1"/>
<evidence type="ECO:0000255" key="2">
    <source>
        <dbReference type="PROSITE-ProRule" id="PRU00498"/>
    </source>
</evidence>
<evidence type="ECO:0000269" key="3">
    <source>
    </source>
</evidence>
<evidence type="ECO:0000303" key="4">
    <source>
    </source>
</evidence>
<evidence type="ECO:0000305" key="5"/>
<evidence type="ECO:0000312" key="6">
    <source>
        <dbReference type="EMBL" id="AAG10823.1"/>
    </source>
</evidence>
<evidence type="ECO:0000312" key="7">
    <source>
        <dbReference type="EMBL" id="AAM91582.1"/>
    </source>
</evidence>
<evidence type="ECO:0000312" key="8">
    <source>
        <dbReference type="EMBL" id="AEE29472.1"/>
    </source>
</evidence>
<protein>
    <recommendedName>
        <fullName evidence="4">UDP-glycosyltransferase TURAN</fullName>
        <ecNumber>2.4.1.-</ecNumber>
    </recommendedName>
</protein>
<gene>
    <name evidence="4" type="primary">TUN</name>
    <name evidence="8" type="ordered locus">At1g16570</name>
    <name evidence="6" type="ORF">F19K19.11</name>
</gene>
<keyword id="KW-0025">Alternative splicing</keyword>
<keyword id="KW-0256">Endoplasmic reticulum</keyword>
<keyword id="KW-0325">Glycoprotein</keyword>
<keyword id="KW-0328">Glycosyltransferase</keyword>
<keyword id="KW-0472">Membrane</keyword>
<keyword id="KW-1185">Reference proteome</keyword>
<keyword id="KW-0808">Transferase</keyword>
<keyword id="KW-0812">Transmembrane</keyword>
<keyword id="KW-1133">Transmembrane helix</keyword>
<feature type="chain" id="PRO_0000433636" description="UDP-glycosyltransferase TURAN">
    <location>
        <begin position="1"/>
        <end position="465"/>
    </location>
</feature>
<feature type="topological domain" description="Cytoplasmic" evidence="5">
    <location>
        <begin position="1"/>
        <end position="75"/>
    </location>
</feature>
<feature type="transmembrane region" description="Helical" evidence="1">
    <location>
        <begin position="76"/>
        <end position="96"/>
    </location>
</feature>
<feature type="topological domain" description="Lumenal" evidence="5">
    <location>
        <begin position="97"/>
        <end position="465"/>
    </location>
</feature>
<feature type="glycosylation site" description="N-linked (GlcNAc...) asparagine" evidence="2">
    <location>
        <position position="238"/>
    </location>
</feature>
<feature type="splice variant" id="VSP_057832" description="In isoform 2.">
    <original>L</original>
    <variation>LVSNSSFFLKDYFTKSTAEDSSNVLVFCLCEQ</variation>
    <location>
        <position position="414"/>
    </location>
</feature>
<organism evidence="7">
    <name type="scientific">Arabidopsis thaliana</name>
    <name type="common">Mouse-ear cress</name>
    <dbReference type="NCBI Taxonomy" id="3702"/>
    <lineage>
        <taxon>Eukaryota</taxon>
        <taxon>Viridiplantae</taxon>
        <taxon>Streptophyta</taxon>
        <taxon>Embryophyta</taxon>
        <taxon>Tracheophyta</taxon>
        <taxon>Spermatophyta</taxon>
        <taxon>Magnoliopsida</taxon>
        <taxon>eudicotyledons</taxon>
        <taxon>Gunneridae</taxon>
        <taxon>Pentapetalae</taxon>
        <taxon>rosids</taxon>
        <taxon>malvids</taxon>
        <taxon>Brassicales</taxon>
        <taxon>Brassicaceae</taxon>
        <taxon>Camelineae</taxon>
        <taxon>Arabidopsis</taxon>
    </lineage>
</organism>
<dbReference type="EC" id="2.4.1.-"/>
<dbReference type="EMBL" id="KJ139004">
    <property type="protein sequence ID" value="AHL38944.1"/>
    <property type="molecule type" value="mRNA"/>
</dbReference>
<dbReference type="EMBL" id="AC011808">
    <property type="protein sequence ID" value="AAG10823.1"/>
    <property type="status" value="ALT_SEQ"/>
    <property type="molecule type" value="Genomic_DNA"/>
</dbReference>
<dbReference type="EMBL" id="CP002684">
    <property type="protein sequence ID" value="AEE29472.1"/>
    <property type="molecule type" value="Genomic_DNA"/>
</dbReference>
<dbReference type="EMBL" id="CP002684">
    <property type="protein sequence ID" value="AEE29473.1"/>
    <property type="molecule type" value="Genomic_DNA"/>
</dbReference>
<dbReference type="EMBL" id="AY128379">
    <property type="protein sequence ID" value="AAM91582.1"/>
    <property type="molecule type" value="mRNA"/>
</dbReference>
<dbReference type="EMBL" id="BT008762">
    <property type="protein sequence ID" value="AAP49524.1"/>
    <property type="molecule type" value="mRNA"/>
</dbReference>
<dbReference type="PIR" id="A86301">
    <property type="entry name" value="A86301"/>
</dbReference>
<dbReference type="RefSeq" id="NP_001117297.1">
    <molecule id="Q8L7M0-2"/>
    <property type="nucleotide sequence ID" value="NM_001123825.1"/>
</dbReference>
<dbReference type="RefSeq" id="NP_173105.1">
    <molecule id="Q8L7M0-1"/>
    <property type="nucleotide sequence ID" value="NM_101521.3"/>
</dbReference>
<dbReference type="FunCoup" id="Q8L7M0">
    <property type="interactions" value="4711"/>
</dbReference>
<dbReference type="STRING" id="3702.Q8L7M0"/>
<dbReference type="CAZy" id="GT33">
    <property type="family name" value="Glycosyltransferase Family 33"/>
</dbReference>
<dbReference type="GlyCosmos" id="Q8L7M0">
    <property type="glycosylation" value="1 site, No reported glycans"/>
</dbReference>
<dbReference type="GlyGen" id="Q8L7M0">
    <property type="glycosylation" value="1 site"/>
</dbReference>
<dbReference type="PaxDb" id="3702-AT1G16570.2"/>
<dbReference type="ProteomicsDB" id="234633">
    <molecule id="Q8L7M0-1"/>
</dbReference>
<dbReference type="EnsemblPlants" id="AT1G16570.1">
    <molecule id="Q8L7M0-1"/>
    <property type="protein sequence ID" value="AT1G16570.1"/>
    <property type="gene ID" value="AT1G16570"/>
</dbReference>
<dbReference type="EnsemblPlants" id="AT1G16570.2">
    <molecule id="Q8L7M0-2"/>
    <property type="protein sequence ID" value="AT1G16570.2"/>
    <property type="gene ID" value="AT1G16570"/>
</dbReference>
<dbReference type="GeneID" id="838227"/>
<dbReference type="Gramene" id="AT1G16570.1">
    <molecule id="Q8L7M0-1"/>
    <property type="protein sequence ID" value="AT1G16570.1"/>
    <property type="gene ID" value="AT1G16570"/>
</dbReference>
<dbReference type="Gramene" id="AT1G16570.2">
    <molecule id="Q8L7M0-2"/>
    <property type="protein sequence ID" value="AT1G16570.2"/>
    <property type="gene ID" value="AT1G16570"/>
</dbReference>
<dbReference type="KEGG" id="ath:AT1G16570"/>
<dbReference type="Araport" id="AT1G16570"/>
<dbReference type="TAIR" id="AT1G16570">
    <property type="gene designation" value="TUN"/>
</dbReference>
<dbReference type="eggNOG" id="KOG2941">
    <property type="taxonomic scope" value="Eukaryota"/>
</dbReference>
<dbReference type="InParanoid" id="Q8L7M0"/>
<dbReference type="OMA" id="CKLIIDW"/>
<dbReference type="PhylomeDB" id="Q8L7M0"/>
<dbReference type="UniPathway" id="UPA00378"/>
<dbReference type="PRO" id="PR:Q8L7M0"/>
<dbReference type="Proteomes" id="UP000006548">
    <property type="component" value="Chromosome 1"/>
</dbReference>
<dbReference type="ExpressionAtlas" id="Q8L7M0">
    <property type="expression patterns" value="baseline and differential"/>
</dbReference>
<dbReference type="GO" id="GO:0005783">
    <property type="term" value="C:endoplasmic reticulum"/>
    <property type="evidence" value="ECO:0000314"/>
    <property type="project" value="TAIR"/>
</dbReference>
<dbReference type="GO" id="GO:0005789">
    <property type="term" value="C:endoplasmic reticulum membrane"/>
    <property type="evidence" value="ECO:0007669"/>
    <property type="project" value="UniProtKB-SubCell"/>
</dbReference>
<dbReference type="GO" id="GO:0000030">
    <property type="term" value="F:mannosyltransferase activity"/>
    <property type="evidence" value="ECO:0007669"/>
    <property type="project" value="InterPro"/>
</dbReference>
<dbReference type="GO" id="GO:0048868">
    <property type="term" value="P:pollen tube development"/>
    <property type="evidence" value="ECO:0000315"/>
    <property type="project" value="UniProtKB"/>
</dbReference>
<dbReference type="GO" id="GO:0010483">
    <property type="term" value="P:pollen tube reception"/>
    <property type="evidence" value="ECO:0000315"/>
    <property type="project" value="TAIR"/>
</dbReference>
<dbReference type="GO" id="GO:0006486">
    <property type="term" value="P:protein glycosylation"/>
    <property type="evidence" value="ECO:0000315"/>
    <property type="project" value="TAIR"/>
</dbReference>
<dbReference type="CDD" id="cd03816">
    <property type="entry name" value="GT33_ALG1-like"/>
    <property type="match status" value="1"/>
</dbReference>
<dbReference type="FunFam" id="3.40.50.2000:FF:000109">
    <property type="entry name" value="Chitobiosyldiphosphodolichol beta-mannosyltransferase"/>
    <property type="match status" value="1"/>
</dbReference>
<dbReference type="FunFam" id="3.40.50.2000:FF:000083">
    <property type="entry name" value="UDP-glycosyltransferase TURAN isoform X1"/>
    <property type="match status" value="1"/>
</dbReference>
<dbReference type="Gene3D" id="3.40.50.2000">
    <property type="entry name" value="Glycogen Phosphorylase B"/>
    <property type="match status" value="1"/>
</dbReference>
<dbReference type="InterPro" id="IPR026051">
    <property type="entry name" value="ALG1-like"/>
</dbReference>
<dbReference type="InterPro" id="IPR028098">
    <property type="entry name" value="Glyco_trans_4-like_N"/>
</dbReference>
<dbReference type="PANTHER" id="PTHR13036">
    <property type="entry name" value="BETA1,4 MANNOSYLTRANSFERASE"/>
    <property type="match status" value="1"/>
</dbReference>
<dbReference type="PANTHER" id="PTHR13036:SF0">
    <property type="entry name" value="CHITOBIOSYLDIPHOSPHODOLICHOL BETA-MANNOSYLTRANSFERASE"/>
    <property type="match status" value="1"/>
</dbReference>
<dbReference type="Pfam" id="PF13692">
    <property type="entry name" value="Glyco_trans_1_4"/>
    <property type="match status" value="1"/>
</dbReference>
<dbReference type="Pfam" id="PF13579">
    <property type="entry name" value="Glyco_trans_4_4"/>
    <property type="match status" value="1"/>
</dbReference>
<dbReference type="SUPFAM" id="SSF53756">
    <property type="entry name" value="UDP-Glycosyltransferase/glycogen phosphorylase"/>
    <property type="match status" value="1"/>
</dbReference>